<comment type="function">
    <text evidence="1">Forms an efflux pump with AaeA. Could function as a metabolic relief valve, allowing to eliminate certain compounds when they accumulate to high levels in the cell.</text>
</comment>
<comment type="subcellular location">
    <subcellularLocation>
        <location evidence="1">Cell inner membrane</location>
        <topology evidence="1">Multi-pass membrane protein</topology>
    </subcellularLocation>
</comment>
<comment type="induction">
    <text evidence="1">Positively coregulated with aaeA and aaeX by AaeR.</text>
</comment>
<comment type="similarity">
    <text evidence="1">Belongs to the aromatic acid exporter ArAE (TC 2.A.85) family.</text>
</comment>
<proteinExistence type="inferred from homology"/>
<sequence length="655" mass="73641">MGIFSIANQHIRFAVKLATAIVLALFVGFHFQLETPRWAVLTAAIVAAGPAFAAGGEPYSGAIRYRGFLRIIGTFIGCIAGLVIIIAMIRAPLLMILVCCIWAGFCTWISSLVRIENSYAWGLAGYTALIIVITIQPEPLLTPQFAVERCSEIVIGIVCAIMADLLFSPRSIKQEVDRELESLLVAQYQLMQLCIKHGDGEVVDKAWGDLVRRTTALQGMRSNLNMESSRWARANRRLKAINTLSLTLITQSCETYLIQNTRPELITDTFREFFDTPVETAQDVHKQLKRLRRVIAWTGERETPVTIYSWVAAATRYQLLKRGVISNTKINATEEEILQGEPEVKVESAERHHAMVNFWRTTLSCILGTLFWLWTGWTSGSGAMVMIAVVTSLAMRLPNPRMVAIDFIYGTLAALPLGLLYFLVIIPNTQQSMLLLCISLAVLGFFLGIEVQKRRLGSMGALASTINIIVLDNPMTFHFSQFLDSALGQIVGCVLAFTVILLVRDKSRDRTGRVLLNQFVSAAVSAMTTNVARRKENHLPALYQQLFLLMNKFPGDLPKFRLALTMIIAHQRLRDAPIPVNEDLSAFHRQMRRTADHVISARSDDKRRRYFGQLLEELEIYQEKLRIWQAPPQVTEPVHRLTGMLHKYQHALTDS</sequence>
<protein>
    <recommendedName>
        <fullName evidence="1">p-hydroxybenzoic acid efflux pump subunit AaeB</fullName>
        <shortName evidence="1">pHBA efflux pump protein B</shortName>
    </recommendedName>
</protein>
<reference key="1">
    <citation type="journal article" date="2009" name="J. Bacteriol.">
        <title>Complete genome sequence and comparative genome analysis of enteropathogenic Escherichia coli O127:H6 strain E2348/69.</title>
        <authorList>
            <person name="Iguchi A."/>
            <person name="Thomson N.R."/>
            <person name="Ogura Y."/>
            <person name="Saunders D."/>
            <person name="Ooka T."/>
            <person name="Henderson I.R."/>
            <person name="Harris D."/>
            <person name="Asadulghani M."/>
            <person name="Kurokawa K."/>
            <person name="Dean P."/>
            <person name="Kenny B."/>
            <person name="Quail M.A."/>
            <person name="Thurston S."/>
            <person name="Dougan G."/>
            <person name="Hayashi T."/>
            <person name="Parkhill J."/>
            <person name="Frankel G."/>
        </authorList>
    </citation>
    <scope>NUCLEOTIDE SEQUENCE [LARGE SCALE GENOMIC DNA]</scope>
    <source>
        <strain>E2348/69 / EPEC</strain>
    </source>
</reference>
<dbReference type="EMBL" id="FM180568">
    <property type="protein sequence ID" value="CAS11059.1"/>
    <property type="molecule type" value="Genomic_DNA"/>
</dbReference>
<dbReference type="RefSeq" id="WP_000510964.1">
    <property type="nucleotide sequence ID" value="NC_011601.1"/>
</dbReference>
<dbReference type="SMR" id="B7UJX2"/>
<dbReference type="KEGG" id="ecg:E2348C_3511"/>
<dbReference type="HOGENOM" id="CLU_027647_0_0_6"/>
<dbReference type="Proteomes" id="UP000008205">
    <property type="component" value="Chromosome"/>
</dbReference>
<dbReference type="GO" id="GO:0005886">
    <property type="term" value="C:plasma membrane"/>
    <property type="evidence" value="ECO:0007669"/>
    <property type="project" value="UniProtKB-SubCell"/>
</dbReference>
<dbReference type="GO" id="GO:0022857">
    <property type="term" value="F:transmembrane transporter activity"/>
    <property type="evidence" value="ECO:0007669"/>
    <property type="project" value="UniProtKB-UniRule"/>
</dbReference>
<dbReference type="GO" id="GO:0046942">
    <property type="term" value="P:carboxylic acid transport"/>
    <property type="evidence" value="ECO:0007669"/>
    <property type="project" value="InterPro"/>
</dbReference>
<dbReference type="HAMAP" id="MF_01545">
    <property type="entry name" value="AaeB"/>
    <property type="match status" value="1"/>
</dbReference>
<dbReference type="InterPro" id="IPR006726">
    <property type="entry name" value="PHBA_efflux_AaeB/fusaric-R"/>
</dbReference>
<dbReference type="InterPro" id="IPR023706">
    <property type="entry name" value="PHBA_efflux_pump_AaeB"/>
</dbReference>
<dbReference type="NCBIfam" id="NF007916">
    <property type="entry name" value="PRK10631.1"/>
    <property type="match status" value="1"/>
</dbReference>
<dbReference type="PANTHER" id="PTHR30509:SF9">
    <property type="entry name" value="MULTIDRUG RESISTANCE PROTEIN MDTO"/>
    <property type="match status" value="1"/>
</dbReference>
<dbReference type="PANTHER" id="PTHR30509">
    <property type="entry name" value="P-HYDROXYBENZOIC ACID EFFLUX PUMP SUBUNIT-RELATED"/>
    <property type="match status" value="1"/>
</dbReference>
<dbReference type="Pfam" id="PF04632">
    <property type="entry name" value="FUSC"/>
    <property type="match status" value="1"/>
</dbReference>
<organism>
    <name type="scientific">Escherichia coli O127:H6 (strain E2348/69 / EPEC)</name>
    <dbReference type="NCBI Taxonomy" id="574521"/>
    <lineage>
        <taxon>Bacteria</taxon>
        <taxon>Pseudomonadati</taxon>
        <taxon>Pseudomonadota</taxon>
        <taxon>Gammaproteobacteria</taxon>
        <taxon>Enterobacterales</taxon>
        <taxon>Enterobacteriaceae</taxon>
        <taxon>Escherichia</taxon>
    </lineage>
</organism>
<keyword id="KW-0997">Cell inner membrane</keyword>
<keyword id="KW-1003">Cell membrane</keyword>
<keyword id="KW-0472">Membrane</keyword>
<keyword id="KW-1185">Reference proteome</keyword>
<keyword id="KW-0812">Transmembrane</keyword>
<keyword id="KW-1133">Transmembrane helix</keyword>
<keyword id="KW-0813">Transport</keyword>
<gene>
    <name evidence="1" type="primary">aaeB</name>
    <name type="ordered locus">E2348C_3511</name>
</gene>
<name>AAEB_ECO27</name>
<feature type="chain" id="PRO_1000185279" description="p-hydroxybenzoic acid efflux pump subunit AaeB">
    <location>
        <begin position="1"/>
        <end position="655"/>
    </location>
</feature>
<feature type="transmembrane region" description="Helical" evidence="1">
    <location>
        <begin position="13"/>
        <end position="33"/>
    </location>
</feature>
<feature type="transmembrane region" description="Helical" evidence="1">
    <location>
        <begin position="38"/>
        <end position="58"/>
    </location>
</feature>
<feature type="transmembrane region" description="Helical" evidence="1">
    <location>
        <begin position="69"/>
        <end position="89"/>
    </location>
</feature>
<feature type="transmembrane region" description="Helical" evidence="1">
    <location>
        <begin position="93"/>
        <end position="113"/>
    </location>
</feature>
<feature type="transmembrane region" description="Helical" evidence="1">
    <location>
        <begin position="121"/>
        <end position="141"/>
    </location>
</feature>
<feature type="transmembrane region" description="Helical" evidence="1">
    <location>
        <begin position="152"/>
        <end position="172"/>
    </location>
</feature>
<feature type="transmembrane region" description="Helical" evidence="1">
    <location>
        <begin position="370"/>
        <end position="390"/>
    </location>
</feature>
<feature type="transmembrane region" description="Helical" evidence="1">
    <location>
        <begin position="407"/>
        <end position="427"/>
    </location>
</feature>
<feature type="transmembrane region" description="Helical" evidence="1">
    <location>
        <begin position="431"/>
        <end position="451"/>
    </location>
</feature>
<feature type="transmembrane region" description="Helical" evidence="1">
    <location>
        <begin position="459"/>
        <end position="479"/>
    </location>
</feature>
<feature type="transmembrane region" description="Helical" evidence="1">
    <location>
        <begin position="482"/>
        <end position="502"/>
    </location>
</feature>
<evidence type="ECO:0000255" key="1">
    <source>
        <dbReference type="HAMAP-Rule" id="MF_01545"/>
    </source>
</evidence>
<accession>B7UJX2</accession>